<name>KAC5_RABIT</name>
<sequence length="103" mass="10945">ATLAPTVLIFPPAPAQLATGAVTIVCVANKYFPDGTVTWEVDGKPLTTGIETSKTPQNSDDCTYNLSSTLTLQKSNYNSHNEYTCQVAQGAGSVVQSFSRKNC</sequence>
<keyword id="KW-0903">Direct protein sequencing</keyword>
<keyword id="KW-1015">Disulfide bond</keyword>
<keyword id="KW-0393">Immunoglobulin domain</keyword>
<keyword id="KW-1185">Reference proteome</keyword>
<protein>
    <recommendedName>
        <fullName>Ig kappa-b5 chain C region</fullName>
    </recommendedName>
</protein>
<feature type="chain" id="PRO_0000153600" description="Ig kappa-b5 chain C region">
    <location>
        <begin position="1" status="less than"/>
        <end position="103"/>
    </location>
</feature>
<feature type="domain" description="Ig-like">
    <location>
        <begin position="5"/>
        <end position="99"/>
    </location>
</feature>
<feature type="disulfide bond">
    <location>
        <begin position="26"/>
        <end position="85"/>
    </location>
</feature>
<feature type="disulfide bond" description="Interchain (with a heavy chain)">
    <location>
        <position position="103"/>
    </location>
</feature>
<feature type="sequence conflict" description="In Ref. 2; AA sequence." evidence="1" ref="2">
    <location>
        <position position="5"/>
    </location>
</feature>
<feature type="sequence conflict" description="In Ref. 2; AA sequence." evidence="1" ref="2">
    <original>P</original>
    <variation>S</variation>
    <location>
        <position position="14"/>
    </location>
</feature>
<feature type="sequence conflict" description="In Ref. 2; AA sequence." evidence="1" ref="2">
    <original>A</original>
    <variation>T</variation>
    <location>
        <position position="21"/>
    </location>
</feature>
<feature type="sequence conflict" description="In Ref. 2; AA sequence." evidence="1" ref="2">
    <original>E</original>
    <variation>Q</variation>
    <location>
        <position position="82"/>
    </location>
</feature>
<feature type="sequence conflict" description="In Ref. 2; AA sequence." evidence="1" ref="2">
    <original>VA</original>
    <variation>LP</variation>
    <location>
        <begin position="87"/>
        <end position="88"/>
    </location>
</feature>
<feature type="non-terminal residue">
    <location>
        <position position="1"/>
    </location>
</feature>
<accession>P01841</accession>
<organism>
    <name type="scientific">Oryctolagus cuniculus</name>
    <name type="common">Rabbit</name>
    <dbReference type="NCBI Taxonomy" id="9986"/>
    <lineage>
        <taxon>Eukaryota</taxon>
        <taxon>Metazoa</taxon>
        <taxon>Chordata</taxon>
        <taxon>Craniata</taxon>
        <taxon>Vertebrata</taxon>
        <taxon>Euteleostomi</taxon>
        <taxon>Mammalia</taxon>
        <taxon>Eutheria</taxon>
        <taxon>Euarchontoglires</taxon>
        <taxon>Glires</taxon>
        <taxon>Lagomorpha</taxon>
        <taxon>Leporidae</taxon>
        <taxon>Oryctolagus</taxon>
    </lineage>
</organism>
<dbReference type="PIR" id="A90480">
    <property type="entry name" value="K5RB"/>
</dbReference>
<dbReference type="SMR" id="P01841"/>
<dbReference type="InParanoid" id="P01841"/>
<dbReference type="Proteomes" id="UP000001811">
    <property type="component" value="Unplaced"/>
</dbReference>
<dbReference type="FunFam" id="2.60.40.10:FF:000283">
    <property type="entry name" value="Immunoglobulin kappa constant"/>
    <property type="match status" value="1"/>
</dbReference>
<dbReference type="Gene3D" id="2.60.40.10">
    <property type="entry name" value="Immunoglobulins"/>
    <property type="match status" value="1"/>
</dbReference>
<dbReference type="InterPro" id="IPR007110">
    <property type="entry name" value="Ig-like_dom"/>
</dbReference>
<dbReference type="InterPro" id="IPR036179">
    <property type="entry name" value="Ig-like_dom_sf"/>
</dbReference>
<dbReference type="InterPro" id="IPR013783">
    <property type="entry name" value="Ig-like_fold"/>
</dbReference>
<dbReference type="InterPro" id="IPR003597">
    <property type="entry name" value="Ig_C1-set"/>
</dbReference>
<dbReference type="InterPro" id="IPR050380">
    <property type="entry name" value="Immune_Resp_Modulators"/>
</dbReference>
<dbReference type="PANTHER" id="PTHR23411">
    <property type="entry name" value="TAPASIN"/>
    <property type="match status" value="1"/>
</dbReference>
<dbReference type="Pfam" id="PF07654">
    <property type="entry name" value="C1-set"/>
    <property type="match status" value="1"/>
</dbReference>
<dbReference type="SMART" id="SM00407">
    <property type="entry name" value="IGc1"/>
    <property type="match status" value="1"/>
</dbReference>
<dbReference type="SUPFAM" id="SSF48726">
    <property type="entry name" value="Immunoglobulin"/>
    <property type="match status" value="1"/>
</dbReference>
<dbReference type="PROSITE" id="PS50835">
    <property type="entry name" value="IG_LIKE"/>
    <property type="match status" value="1"/>
</dbReference>
<evidence type="ECO:0000305" key="1"/>
<reference key="1">
    <citation type="journal article" date="1983" name="Biochemistry">
        <title>Partial amino acid sequence of a rabbit immunoglobulin light chain of allotype b5.</title>
        <authorList>
            <person name="Ayadi H."/>
            <person name="Dutka S."/>
            <person name="Paroutaud P."/>
            <person name="Strosberg A.D."/>
        </authorList>
    </citation>
    <scope>PROTEIN SEQUENCE</scope>
</reference>
<reference key="2">
    <citation type="journal article" date="1980" name="Mol. Immunol.">
        <title>Partial primary structure of the immunoglobulin light chain constant region of a single rabbit of b5 allotype.</title>
        <authorList>
            <person name="Chersi A."/>
            <person name="Alexander C.B."/>
            <person name="Mage R.G."/>
        </authorList>
    </citation>
    <scope>PROTEIN SEQUENCE OF 4-103</scope>
</reference>
<proteinExistence type="evidence at protein level"/>